<organism>
    <name type="scientific">Nitratidesulfovibrio vulgaris (strain DSM 19637 / Miyazaki F)</name>
    <name type="common">Desulfovibrio vulgaris</name>
    <dbReference type="NCBI Taxonomy" id="883"/>
    <lineage>
        <taxon>Bacteria</taxon>
        <taxon>Pseudomonadati</taxon>
        <taxon>Thermodesulfobacteriota</taxon>
        <taxon>Desulfovibrionia</taxon>
        <taxon>Desulfovibrionales</taxon>
        <taxon>Desulfovibrionaceae</taxon>
        <taxon>Nitratidesulfovibrio</taxon>
    </lineage>
</organism>
<evidence type="ECO:0000255" key="1">
    <source>
        <dbReference type="HAMAP-Rule" id="MF_00639"/>
    </source>
</evidence>
<sequence length="445" mass="47629">MTCDKHTAQTIGKGDLVVVVGAGRSGMAAARLLHRMGARVRLLERNADGVPADFVRWAAEAGVEIATGDHAPTQFEGARAVVPSPGMAVSKLRPLLAQGPDAPEIMAEMELAWRQLDGEPVLAVTGTSGKTTTVSLCAAMLRAQGLSVFLGGNIGTPLSEYVLSVAHGGADGQGRADVLVIEISSFQLQACTTFRPRVAMLLNISENHLDYHADMAEYIDAKFRLFRCMEEGDLAIFGQGVRDLVAARDLKPRTLFFDAAARRFPRTCLLGGHNQANIEAAWQACREFGVTPEAAEKAVADFAPMEHRLEAVAERNGVLWVNDSKCTTVEALRVALQAFDRPVVLMVGGKFKGGDLASLLPLLCGRVRAVVGFGASREHFEGAWMGQGDFPMSWHPALEPAVAEAAALARPGDAVVMAPATSSFDLFANYKERGHAFRRAVEALP</sequence>
<name>MURD_NITV9</name>
<gene>
    <name evidence="1" type="primary">murD</name>
    <name type="ordered locus">DvMF_0958</name>
</gene>
<keyword id="KW-0067">ATP-binding</keyword>
<keyword id="KW-0131">Cell cycle</keyword>
<keyword id="KW-0132">Cell division</keyword>
<keyword id="KW-0133">Cell shape</keyword>
<keyword id="KW-0961">Cell wall biogenesis/degradation</keyword>
<keyword id="KW-0963">Cytoplasm</keyword>
<keyword id="KW-0436">Ligase</keyword>
<keyword id="KW-0547">Nucleotide-binding</keyword>
<keyword id="KW-0573">Peptidoglycan synthesis</keyword>
<feature type="chain" id="PRO_1000130853" description="UDP-N-acetylmuramoylalanine--D-glutamate ligase">
    <location>
        <begin position="1"/>
        <end position="445"/>
    </location>
</feature>
<feature type="binding site" evidence="1">
    <location>
        <begin position="126"/>
        <end position="132"/>
    </location>
    <ligand>
        <name>ATP</name>
        <dbReference type="ChEBI" id="CHEBI:30616"/>
    </ligand>
</feature>
<reference key="1">
    <citation type="submission" date="2008-10" db="EMBL/GenBank/DDBJ databases">
        <title>Complete sequence of Desulfovibrio vulgaris str. 'Miyazaki F'.</title>
        <authorList>
            <person name="Lucas S."/>
            <person name="Copeland A."/>
            <person name="Lapidus A."/>
            <person name="Glavina del Rio T."/>
            <person name="Dalin E."/>
            <person name="Tice H."/>
            <person name="Bruce D."/>
            <person name="Goodwin L."/>
            <person name="Pitluck S."/>
            <person name="Sims D."/>
            <person name="Brettin T."/>
            <person name="Detter J.C."/>
            <person name="Han C."/>
            <person name="Larimer F."/>
            <person name="Land M."/>
            <person name="Hauser L."/>
            <person name="Kyrpides N."/>
            <person name="Mikhailova N."/>
            <person name="Hazen T.C."/>
            <person name="Richardson P."/>
        </authorList>
    </citation>
    <scope>NUCLEOTIDE SEQUENCE [LARGE SCALE GENOMIC DNA]</scope>
    <source>
        <strain>DSM 19637 / Miyazaki F</strain>
    </source>
</reference>
<dbReference type="EC" id="6.3.2.9" evidence="1"/>
<dbReference type="EMBL" id="CP001197">
    <property type="protein sequence ID" value="ACL07913.1"/>
    <property type="molecule type" value="Genomic_DNA"/>
</dbReference>
<dbReference type="SMR" id="B8DP81"/>
<dbReference type="STRING" id="883.DvMF_0958"/>
<dbReference type="KEGG" id="dvm:DvMF_0958"/>
<dbReference type="eggNOG" id="COG0771">
    <property type="taxonomic scope" value="Bacteria"/>
</dbReference>
<dbReference type="HOGENOM" id="CLU_032540_0_0_7"/>
<dbReference type="OrthoDB" id="9809796at2"/>
<dbReference type="UniPathway" id="UPA00219"/>
<dbReference type="GO" id="GO:0005737">
    <property type="term" value="C:cytoplasm"/>
    <property type="evidence" value="ECO:0007669"/>
    <property type="project" value="UniProtKB-SubCell"/>
</dbReference>
<dbReference type="GO" id="GO:0005524">
    <property type="term" value="F:ATP binding"/>
    <property type="evidence" value="ECO:0007669"/>
    <property type="project" value="UniProtKB-UniRule"/>
</dbReference>
<dbReference type="GO" id="GO:0071949">
    <property type="term" value="F:FAD binding"/>
    <property type="evidence" value="ECO:0007669"/>
    <property type="project" value="InterPro"/>
</dbReference>
<dbReference type="GO" id="GO:0008764">
    <property type="term" value="F:UDP-N-acetylmuramoylalanine-D-glutamate ligase activity"/>
    <property type="evidence" value="ECO:0007669"/>
    <property type="project" value="UniProtKB-UniRule"/>
</dbReference>
<dbReference type="GO" id="GO:0051301">
    <property type="term" value="P:cell division"/>
    <property type="evidence" value="ECO:0007669"/>
    <property type="project" value="UniProtKB-KW"/>
</dbReference>
<dbReference type="GO" id="GO:0071555">
    <property type="term" value="P:cell wall organization"/>
    <property type="evidence" value="ECO:0007669"/>
    <property type="project" value="UniProtKB-KW"/>
</dbReference>
<dbReference type="GO" id="GO:0009252">
    <property type="term" value="P:peptidoglycan biosynthetic process"/>
    <property type="evidence" value="ECO:0007669"/>
    <property type="project" value="UniProtKB-UniRule"/>
</dbReference>
<dbReference type="GO" id="GO:0008360">
    <property type="term" value="P:regulation of cell shape"/>
    <property type="evidence" value="ECO:0007669"/>
    <property type="project" value="UniProtKB-KW"/>
</dbReference>
<dbReference type="Gene3D" id="3.90.190.20">
    <property type="entry name" value="Mur ligase, C-terminal domain"/>
    <property type="match status" value="1"/>
</dbReference>
<dbReference type="Gene3D" id="3.40.1190.10">
    <property type="entry name" value="Mur-like, catalytic domain"/>
    <property type="match status" value="1"/>
</dbReference>
<dbReference type="Gene3D" id="3.40.50.720">
    <property type="entry name" value="NAD(P)-binding Rossmann-like Domain"/>
    <property type="match status" value="1"/>
</dbReference>
<dbReference type="HAMAP" id="MF_00639">
    <property type="entry name" value="MurD"/>
    <property type="match status" value="1"/>
</dbReference>
<dbReference type="InterPro" id="IPR002938">
    <property type="entry name" value="FAD-bd"/>
</dbReference>
<dbReference type="InterPro" id="IPR036565">
    <property type="entry name" value="Mur-like_cat_sf"/>
</dbReference>
<dbReference type="InterPro" id="IPR004101">
    <property type="entry name" value="Mur_ligase_C"/>
</dbReference>
<dbReference type="InterPro" id="IPR036615">
    <property type="entry name" value="Mur_ligase_C_dom_sf"/>
</dbReference>
<dbReference type="InterPro" id="IPR013221">
    <property type="entry name" value="Mur_ligase_cen"/>
</dbReference>
<dbReference type="InterPro" id="IPR005762">
    <property type="entry name" value="MurD"/>
</dbReference>
<dbReference type="NCBIfam" id="TIGR01087">
    <property type="entry name" value="murD"/>
    <property type="match status" value="1"/>
</dbReference>
<dbReference type="PANTHER" id="PTHR43692">
    <property type="entry name" value="UDP-N-ACETYLMURAMOYLALANINE--D-GLUTAMATE LIGASE"/>
    <property type="match status" value="1"/>
</dbReference>
<dbReference type="PANTHER" id="PTHR43692:SF1">
    <property type="entry name" value="UDP-N-ACETYLMURAMOYLALANINE--D-GLUTAMATE LIGASE"/>
    <property type="match status" value="1"/>
</dbReference>
<dbReference type="Pfam" id="PF01494">
    <property type="entry name" value="FAD_binding_3"/>
    <property type="match status" value="1"/>
</dbReference>
<dbReference type="Pfam" id="PF02875">
    <property type="entry name" value="Mur_ligase_C"/>
    <property type="match status" value="1"/>
</dbReference>
<dbReference type="Pfam" id="PF08245">
    <property type="entry name" value="Mur_ligase_M"/>
    <property type="match status" value="1"/>
</dbReference>
<dbReference type="SUPFAM" id="SSF51984">
    <property type="entry name" value="MurCD N-terminal domain"/>
    <property type="match status" value="1"/>
</dbReference>
<dbReference type="SUPFAM" id="SSF53623">
    <property type="entry name" value="MurD-like peptide ligases, catalytic domain"/>
    <property type="match status" value="1"/>
</dbReference>
<dbReference type="SUPFAM" id="SSF53244">
    <property type="entry name" value="MurD-like peptide ligases, peptide-binding domain"/>
    <property type="match status" value="1"/>
</dbReference>
<proteinExistence type="inferred from homology"/>
<comment type="function">
    <text evidence="1">Cell wall formation. Catalyzes the addition of glutamate to the nucleotide precursor UDP-N-acetylmuramoyl-L-alanine (UMA).</text>
</comment>
<comment type="catalytic activity">
    <reaction evidence="1">
        <text>UDP-N-acetyl-alpha-D-muramoyl-L-alanine + D-glutamate + ATP = UDP-N-acetyl-alpha-D-muramoyl-L-alanyl-D-glutamate + ADP + phosphate + H(+)</text>
        <dbReference type="Rhea" id="RHEA:16429"/>
        <dbReference type="ChEBI" id="CHEBI:15378"/>
        <dbReference type="ChEBI" id="CHEBI:29986"/>
        <dbReference type="ChEBI" id="CHEBI:30616"/>
        <dbReference type="ChEBI" id="CHEBI:43474"/>
        <dbReference type="ChEBI" id="CHEBI:83898"/>
        <dbReference type="ChEBI" id="CHEBI:83900"/>
        <dbReference type="ChEBI" id="CHEBI:456216"/>
        <dbReference type="EC" id="6.3.2.9"/>
    </reaction>
</comment>
<comment type="pathway">
    <text evidence="1">Cell wall biogenesis; peptidoglycan biosynthesis.</text>
</comment>
<comment type="subcellular location">
    <subcellularLocation>
        <location evidence="1">Cytoplasm</location>
    </subcellularLocation>
</comment>
<comment type="similarity">
    <text evidence="1">Belongs to the MurCDEF family.</text>
</comment>
<protein>
    <recommendedName>
        <fullName evidence="1">UDP-N-acetylmuramoylalanine--D-glutamate ligase</fullName>
        <ecNumber evidence="1">6.3.2.9</ecNumber>
    </recommendedName>
    <alternativeName>
        <fullName evidence="1">D-glutamic acid-adding enzyme</fullName>
    </alternativeName>
    <alternativeName>
        <fullName evidence="1">UDP-N-acetylmuramoyl-L-alanyl-D-glutamate synthetase</fullName>
    </alternativeName>
</protein>
<accession>B8DP81</accession>